<organism>
    <name type="scientific">Pagrus major</name>
    <name type="common">Red sea bream</name>
    <name type="synonym">Chrysophrys major</name>
    <dbReference type="NCBI Taxonomy" id="143350"/>
    <lineage>
        <taxon>Eukaryota</taxon>
        <taxon>Metazoa</taxon>
        <taxon>Chordata</taxon>
        <taxon>Craniata</taxon>
        <taxon>Vertebrata</taxon>
        <taxon>Euteleostomi</taxon>
        <taxon>Actinopterygii</taxon>
        <taxon>Neopterygii</taxon>
        <taxon>Teleostei</taxon>
        <taxon>Neoteleostei</taxon>
        <taxon>Acanthomorphata</taxon>
        <taxon>Eupercaria</taxon>
        <taxon>Spariformes</taxon>
        <taxon>Sparidae</taxon>
        <taxon>Pagrus</taxon>
    </lineage>
</organism>
<name>H2AV_PAGMA</name>
<evidence type="ECO:0000250" key="1"/>
<evidence type="ECO:0000250" key="2">
    <source>
        <dbReference type="UniProtKB" id="P0C0S5"/>
    </source>
</evidence>
<evidence type="ECO:0000256" key="3">
    <source>
        <dbReference type="SAM" id="MobiDB-lite"/>
    </source>
</evidence>
<evidence type="ECO:0000305" key="4"/>
<feature type="initiator methionine" description="Removed" evidence="1">
    <location>
        <position position="1"/>
    </location>
</feature>
<feature type="chain" id="PRO_0000055305" description="Histone H2A.V">
    <location>
        <begin position="2"/>
        <end position="128"/>
    </location>
</feature>
<feature type="region of interest" description="Disordered" evidence="3">
    <location>
        <begin position="1"/>
        <end position="23"/>
    </location>
</feature>
<feature type="compositionally biased region" description="Basic and acidic residues" evidence="3">
    <location>
        <begin position="1"/>
        <end position="12"/>
    </location>
</feature>
<feature type="modified residue" description="N6-acetyllysine" evidence="1">
    <location>
        <position position="5"/>
    </location>
</feature>
<feature type="modified residue" description="N6-acetyllysine" evidence="1">
    <location>
        <position position="8"/>
    </location>
</feature>
<feature type="modified residue" description="N6-acetyllysine" evidence="1">
    <location>
        <position position="12"/>
    </location>
</feature>
<feature type="modified residue" description="N6-lactoyllysine; alternate" evidence="2">
    <location>
        <position position="12"/>
    </location>
</feature>
<feature type="modified residue" description="N6-lactoyllysine; alternate" evidence="2">
    <location>
        <position position="14"/>
    </location>
</feature>
<feature type="modified residue" description="N6-lactoyllysine" evidence="2">
    <location>
        <position position="116"/>
    </location>
</feature>
<feature type="cross-link" description="Glycyl lysine isopeptide (Lys-Gly) (interchain with G-Cter in ubiquitin)" evidence="1">
    <location>
        <position position="122"/>
    </location>
</feature>
<gene>
    <name type="primary">h2az2</name>
</gene>
<sequence>MAGGKAGKDSGKAKAKAVSRSQRAGLQFPVGRIHRHLKTRTTSHGRVGATAAVYSAAILEYLTAEVLELAGNASKDLKVKRITPRHLQLAIRGDEELDSLIKATIAGGGVIPHIHKSLIGKKGQQKTA</sequence>
<protein>
    <recommendedName>
        <fullName>Histone H2A.V</fullName>
    </recommendedName>
    <alternativeName>
        <fullName>H2A.F/Z</fullName>
    </alternativeName>
</protein>
<reference key="1">
    <citation type="journal article" date="2004" name="Aquaculture">
        <title>Analysis of immune-relevant genes expressed in red sea bream spleen.</title>
        <authorList>
            <person name="Chen S.-L."/>
            <person name="Xu M.-Y."/>
            <person name="Hu S.-L."/>
            <person name="Li L."/>
        </authorList>
        <dbReference type="AGRICOLA" id="IND43674139"/>
    </citation>
    <scope>NUCLEOTIDE SEQUENCE [MRNA]</scope>
    <source>
        <tissue>Spleen</tissue>
    </source>
</reference>
<dbReference type="EMBL" id="AY190700">
    <property type="protein sequence ID" value="AAP20175.1"/>
    <property type="molecule type" value="mRNA"/>
</dbReference>
<dbReference type="SMR" id="Q6Y237"/>
<dbReference type="GO" id="GO:0000786">
    <property type="term" value="C:nucleosome"/>
    <property type="evidence" value="ECO:0007669"/>
    <property type="project" value="UniProtKB-KW"/>
</dbReference>
<dbReference type="GO" id="GO:0005634">
    <property type="term" value="C:nucleus"/>
    <property type="evidence" value="ECO:0007669"/>
    <property type="project" value="UniProtKB-SubCell"/>
</dbReference>
<dbReference type="GO" id="GO:0003677">
    <property type="term" value="F:DNA binding"/>
    <property type="evidence" value="ECO:0007669"/>
    <property type="project" value="UniProtKB-KW"/>
</dbReference>
<dbReference type="GO" id="GO:0046982">
    <property type="term" value="F:protein heterodimerization activity"/>
    <property type="evidence" value="ECO:0007669"/>
    <property type="project" value="InterPro"/>
</dbReference>
<dbReference type="GO" id="GO:0030527">
    <property type="term" value="F:structural constituent of chromatin"/>
    <property type="evidence" value="ECO:0007669"/>
    <property type="project" value="InterPro"/>
</dbReference>
<dbReference type="CDD" id="cd00074">
    <property type="entry name" value="HFD_H2A"/>
    <property type="match status" value="1"/>
</dbReference>
<dbReference type="FunFam" id="1.10.20.10:FF:000005">
    <property type="entry name" value="Histone H2A"/>
    <property type="match status" value="1"/>
</dbReference>
<dbReference type="Gene3D" id="1.10.20.10">
    <property type="entry name" value="Histone, subunit A"/>
    <property type="match status" value="1"/>
</dbReference>
<dbReference type="InterPro" id="IPR009072">
    <property type="entry name" value="Histone-fold"/>
</dbReference>
<dbReference type="InterPro" id="IPR002119">
    <property type="entry name" value="Histone_H2A"/>
</dbReference>
<dbReference type="InterPro" id="IPR007125">
    <property type="entry name" value="Histone_H2A/H2B/H3"/>
</dbReference>
<dbReference type="InterPro" id="IPR032454">
    <property type="entry name" value="Histone_H2A_C"/>
</dbReference>
<dbReference type="InterPro" id="IPR032458">
    <property type="entry name" value="Histone_H2A_CS"/>
</dbReference>
<dbReference type="PANTHER" id="PTHR23430">
    <property type="entry name" value="HISTONE H2A"/>
    <property type="match status" value="1"/>
</dbReference>
<dbReference type="Pfam" id="PF00125">
    <property type="entry name" value="Histone"/>
    <property type="match status" value="1"/>
</dbReference>
<dbReference type="Pfam" id="PF16211">
    <property type="entry name" value="Histone_H2A_C"/>
    <property type="match status" value="1"/>
</dbReference>
<dbReference type="PRINTS" id="PR00620">
    <property type="entry name" value="HISTONEH2A"/>
</dbReference>
<dbReference type="SMART" id="SM00414">
    <property type="entry name" value="H2A"/>
    <property type="match status" value="1"/>
</dbReference>
<dbReference type="SUPFAM" id="SSF47113">
    <property type="entry name" value="Histone-fold"/>
    <property type="match status" value="1"/>
</dbReference>
<dbReference type="PROSITE" id="PS00046">
    <property type="entry name" value="HISTONE_H2A"/>
    <property type="match status" value="1"/>
</dbReference>
<keyword id="KW-0007">Acetylation</keyword>
<keyword id="KW-0158">Chromosome</keyword>
<keyword id="KW-0238">DNA-binding</keyword>
<keyword id="KW-1017">Isopeptide bond</keyword>
<keyword id="KW-0544">Nucleosome core</keyword>
<keyword id="KW-0539">Nucleus</keyword>
<keyword id="KW-0832">Ubl conjugation</keyword>
<proteinExistence type="evidence at transcript level"/>
<accession>Q6Y237</accession>
<comment type="function">
    <text evidence="1">Variant histone H2A which replaces conventional H2A in a subset of nucleosomes. Nucleosomes wrap and compact DNA into chromatin, limiting DNA accessibility to the cellular machineries which require DNA as a template. Histones thereby play a central role in transcription regulation, DNA repair, DNA replication and chromosomal stability. DNA accessibility is regulated via a complex set of post-translational modifications of histones, also called histone code, and nucleosome remodeling. May be involved in the formation of constitutive heterochromatin. May be required for chromosome segregation during cell division (By similarity).</text>
</comment>
<comment type="subunit">
    <text evidence="1">The nucleosome is a histone octamer containing two molecules each of H2A, H2B, H3 and H4 assembled in one H3-H4 heterotetramer and two H2A-H2B heterodimers. The octamer wraps approximately 147 bp of DNA. H2A or its variant H2AZ1 forms a heterodimer with H2B (By similarity).</text>
</comment>
<comment type="subcellular location">
    <subcellularLocation>
        <location evidence="1">Nucleus</location>
    </subcellularLocation>
    <subcellularLocation>
        <location evidence="1">Chromosome</location>
    </subcellularLocation>
</comment>
<comment type="PTM">
    <text evidence="1">Monoubiquitination of Lys-122 gives a specific tag for epigenetic transcriptional repression.</text>
</comment>
<comment type="PTM">
    <text evidence="1">Acetylated on Lys-5, Lys-8 and Lys-12 when associated with the 5'-end of active genes.</text>
</comment>
<comment type="similarity">
    <text evidence="4">Belongs to the histone H2A family.</text>
</comment>